<organism>
    <name type="scientific">Bacillus cereus (strain G9842)</name>
    <dbReference type="NCBI Taxonomy" id="405531"/>
    <lineage>
        <taxon>Bacteria</taxon>
        <taxon>Bacillati</taxon>
        <taxon>Bacillota</taxon>
        <taxon>Bacilli</taxon>
        <taxon>Bacillales</taxon>
        <taxon>Bacillaceae</taxon>
        <taxon>Bacillus</taxon>
        <taxon>Bacillus cereus group</taxon>
    </lineage>
</organism>
<dbReference type="EMBL" id="CP001186">
    <property type="protein sequence ID" value="ACK93064.1"/>
    <property type="molecule type" value="Genomic_DNA"/>
</dbReference>
<dbReference type="RefSeq" id="WP_000061930.1">
    <property type="nucleotide sequence ID" value="NC_011772.1"/>
</dbReference>
<dbReference type="KEGG" id="bcg:BCG9842_B3989"/>
<dbReference type="HOGENOM" id="CLU_027059_2_0_9"/>
<dbReference type="Proteomes" id="UP000006744">
    <property type="component" value="Chromosome"/>
</dbReference>
<dbReference type="GO" id="GO:0051539">
    <property type="term" value="F:4 iron, 4 sulfur cluster binding"/>
    <property type="evidence" value="ECO:0007669"/>
    <property type="project" value="UniProtKB-KW"/>
</dbReference>
<dbReference type="GO" id="GO:0046872">
    <property type="term" value="F:metal ion binding"/>
    <property type="evidence" value="ECO:0007669"/>
    <property type="project" value="UniProtKB-KW"/>
</dbReference>
<dbReference type="GO" id="GO:0006089">
    <property type="term" value="P:lactate metabolic process"/>
    <property type="evidence" value="ECO:0007669"/>
    <property type="project" value="UniProtKB-UniRule"/>
</dbReference>
<dbReference type="Gene3D" id="1.10.1060.10">
    <property type="entry name" value="Alpha-helical ferredoxin"/>
    <property type="match status" value="1"/>
</dbReference>
<dbReference type="Gene3D" id="3.40.50.10420">
    <property type="entry name" value="NagB/RpiA/CoA transferase-like"/>
    <property type="match status" value="1"/>
</dbReference>
<dbReference type="HAMAP" id="MF_02103">
    <property type="entry name" value="LutB"/>
    <property type="match status" value="1"/>
</dbReference>
<dbReference type="InterPro" id="IPR017896">
    <property type="entry name" value="4Fe4S_Fe-S-bd"/>
</dbReference>
<dbReference type="InterPro" id="IPR017900">
    <property type="entry name" value="4Fe4S_Fe_S_CS"/>
</dbReference>
<dbReference type="InterPro" id="IPR024185">
    <property type="entry name" value="FTHF_cligase-like_sf"/>
</dbReference>
<dbReference type="InterPro" id="IPR009051">
    <property type="entry name" value="Helical_ferredxn"/>
</dbReference>
<dbReference type="InterPro" id="IPR003741">
    <property type="entry name" value="LUD_dom"/>
</dbReference>
<dbReference type="InterPro" id="IPR022825">
    <property type="entry name" value="LutB"/>
</dbReference>
<dbReference type="InterPro" id="IPR004452">
    <property type="entry name" value="LutB/LldF"/>
</dbReference>
<dbReference type="InterPro" id="IPR024569">
    <property type="entry name" value="LutB_C"/>
</dbReference>
<dbReference type="InterPro" id="IPR037171">
    <property type="entry name" value="NagB/RpiA_transferase-like"/>
</dbReference>
<dbReference type="NCBIfam" id="TIGR00273">
    <property type="entry name" value="LutB/LldF family L-lactate oxidation iron-sulfur protein"/>
    <property type="match status" value="1"/>
</dbReference>
<dbReference type="PANTHER" id="PTHR47153">
    <property type="entry name" value="LACTATE UTILIZATION PROTEIN B"/>
    <property type="match status" value="1"/>
</dbReference>
<dbReference type="PANTHER" id="PTHR47153:SF2">
    <property type="entry name" value="LACTATE UTILIZATION PROTEIN B"/>
    <property type="match status" value="1"/>
</dbReference>
<dbReference type="Pfam" id="PF13183">
    <property type="entry name" value="Fer4_8"/>
    <property type="match status" value="1"/>
</dbReference>
<dbReference type="Pfam" id="PF02589">
    <property type="entry name" value="LUD_dom"/>
    <property type="match status" value="1"/>
</dbReference>
<dbReference type="Pfam" id="PF11870">
    <property type="entry name" value="LutB_C"/>
    <property type="match status" value="1"/>
</dbReference>
<dbReference type="SUPFAM" id="SSF46548">
    <property type="entry name" value="alpha-helical ferredoxin"/>
    <property type="match status" value="1"/>
</dbReference>
<dbReference type="SUPFAM" id="SSF100950">
    <property type="entry name" value="NagB/RpiA/CoA transferase-like"/>
    <property type="match status" value="1"/>
</dbReference>
<dbReference type="PROSITE" id="PS00198">
    <property type="entry name" value="4FE4S_FER_1"/>
    <property type="match status" value="1"/>
</dbReference>
<feature type="chain" id="PRO_0000383965" description="Lactate utilization protein B">
    <location>
        <begin position="1"/>
        <end position="473"/>
    </location>
</feature>
<feature type="domain" description="4Fe-4S ferredoxin-type 1" evidence="1">
    <location>
        <begin position="302"/>
        <end position="332"/>
    </location>
</feature>
<feature type="domain" description="4Fe-4S ferredoxin-type 2" evidence="1">
    <location>
        <begin position="351"/>
        <end position="380"/>
    </location>
</feature>
<feature type="binding site" evidence="1">
    <location>
        <position position="311"/>
    </location>
    <ligand>
        <name>[4Fe-4S] cluster</name>
        <dbReference type="ChEBI" id="CHEBI:49883"/>
        <label>1</label>
    </ligand>
</feature>
<feature type="binding site" evidence="1">
    <location>
        <position position="314"/>
    </location>
    <ligand>
        <name>[4Fe-4S] cluster</name>
        <dbReference type="ChEBI" id="CHEBI:49883"/>
        <label>1</label>
    </ligand>
</feature>
<feature type="binding site" evidence="1">
    <location>
        <position position="317"/>
    </location>
    <ligand>
        <name>[4Fe-4S] cluster</name>
        <dbReference type="ChEBI" id="CHEBI:49883"/>
        <label>1</label>
    </ligand>
</feature>
<feature type="binding site" evidence="1">
    <location>
        <position position="321"/>
    </location>
    <ligand>
        <name>[4Fe-4S] cluster</name>
        <dbReference type="ChEBI" id="CHEBI:49883"/>
        <label>2</label>
    </ligand>
</feature>
<feature type="binding site" evidence="1">
    <location>
        <position position="364"/>
    </location>
    <ligand>
        <name>[4Fe-4S] cluster</name>
        <dbReference type="ChEBI" id="CHEBI:49883"/>
        <label>2</label>
    </ligand>
</feature>
<feature type="binding site" evidence="1">
    <location>
        <position position="367"/>
    </location>
    <ligand>
        <name>[4Fe-4S] cluster</name>
        <dbReference type="ChEBI" id="CHEBI:49883"/>
        <label>2</label>
    </ligand>
</feature>
<feature type="binding site" evidence="1">
    <location>
        <position position="371"/>
    </location>
    <ligand>
        <name>[4Fe-4S] cluster</name>
        <dbReference type="ChEBI" id="CHEBI:49883"/>
        <label>1</label>
    </ligand>
</feature>
<gene>
    <name evidence="1" type="primary">lutB</name>
    <name type="ordered locus">BCG9842_B3989</name>
</gene>
<evidence type="ECO:0000255" key="1">
    <source>
        <dbReference type="HAMAP-Rule" id="MF_02103"/>
    </source>
</evidence>
<keyword id="KW-0004">4Fe-4S</keyword>
<keyword id="KW-0249">Electron transport</keyword>
<keyword id="KW-0408">Iron</keyword>
<keyword id="KW-0411">Iron-sulfur</keyword>
<keyword id="KW-0479">Metal-binding</keyword>
<keyword id="KW-0677">Repeat</keyword>
<keyword id="KW-0813">Transport</keyword>
<protein>
    <recommendedName>
        <fullName evidence="1">Lactate utilization protein B</fullName>
    </recommendedName>
</protein>
<reference key="1">
    <citation type="submission" date="2008-10" db="EMBL/GenBank/DDBJ databases">
        <title>Genome sequence of Bacillus cereus G9842.</title>
        <authorList>
            <person name="Dodson R.J."/>
            <person name="Durkin A.S."/>
            <person name="Rosovitz M.J."/>
            <person name="Rasko D.A."/>
            <person name="Hoffmaster A."/>
            <person name="Ravel J."/>
            <person name="Sutton G."/>
        </authorList>
    </citation>
    <scope>NUCLEOTIDE SEQUENCE [LARGE SCALE GENOMIC DNA]</scope>
    <source>
        <strain>G9842</strain>
    </source>
</reference>
<comment type="function">
    <text evidence="1">Is involved in L-lactate degradation and allows cells to grow with lactate as the sole carbon source. Has probably a role as an electron transporter during oxidation of L-lactate.</text>
</comment>
<comment type="similarity">
    <text evidence="1">Belongs to the LutB/YkgF family.</text>
</comment>
<accession>B7IMD4</accession>
<proteinExistence type="inferred from homology"/>
<name>LUTB_BACC2</name>
<sequence length="473" mass="52627">MSMKISEKKFNDRVGDGIQDSFMRGAVSSAQTRLYTNRLKAADELGNWEEWRELGEQIRQHTLENLDYYLMQLSENVSKRGGHVYFAKTKEEAAKYIQDVAKKKQAKKVVKSKSMVTEEISMNHALEEIGCEVLESDLGEYILQVDNDPPSHIIAPALHKNRTQIRDVFKEKLGYENSDDPYEMTKFVRKQLREKFMDAEIGVTGCNFAVANTGSLCLVTNEGNADLVMSIPKTQIAVMGMERMVPTMEELDVLVGLLCRSAVGQKLTSYVTVAGPIQEEEVDGPEEFHLVVVDNGRSQILGSEFRSVLQCIRCAACVNVCPVYRHVGGHSYGSIYSGPIGAVLTPLLGGYDDYKELPYASSLCGACTEACPVKIPLHDLLLKHRQVIVEQEGRAPLAEKLAMKMFSMGASSAALYKMGSKMAPAAMSPFTSGNRVSKGVGPLKNWTDIREFPAPSKERFRDWYKDHKKGGDK</sequence>